<dbReference type="EMBL" id="AF383003">
    <property type="protein sequence ID" value="AAM90424.1"/>
    <property type="molecule type" value="Genomic_DNA"/>
</dbReference>
<dbReference type="SMR" id="Q8M4E6"/>
<dbReference type="GO" id="GO:0005743">
    <property type="term" value="C:mitochondrial inner membrane"/>
    <property type="evidence" value="ECO:0007669"/>
    <property type="project" value="UniProtKB-SubCell"/>
</dbReference>
<dbReference type="GO" id="GO:0045275">
    <property type="term" value="C:respiratory chain complex III"/>
    <property type="evidence" value="ECO:0007669"/>
    <property type="project" value="InterPro"/>
</dbReference>
<dbReference type="GO" id="GO:0046872">
    <property type="term" value="F:metal ion binding"/>
    <property type="evidence" value="ECO:0007669"/>
    <property type="project" value="UniProtKB-KW"/>
</dbReference>
<dbReference type="GO" id="GO:0008121">
    <property type="term" value="F:ubiquinol-cytochrome-c reductase activity"/>
    <property type="evidence" value="ECO:0007669"/>
    <property type="project" value="InterPro"/>
</dbReference>
<dbReference type="GO" id="GO:0006122">
    <property type="term" value="P:mitochondrial electron transport, ubiquinol to cytochrome c"/>
    <property type="evidence" value="ECO:0007669"/>
    <property type="project" value="TreeGrafter"/>
</dbReference>
<dbReference type="CDD" id="cd00290">
    <property type="entry name" value="cytochrome_b_C"/>
    <property type="match status" value="1"/>
</dbReference>
<dbReference type="CDD" id="cd00284">
    <property type="entry name" value="Cytochrome_b_N"/>
    <property type="match status" value="1"/>
</dbReference>
<dbReference type="FunFam" id="1.20.810.10:FF:000002">
    <property type="entry name" value="Cytochrome b"/>
    <property type="match status" value="1"/>
</dbReference>
<dbReference type="Gene3D" id="1.20.810.10">
    <property type="entry name" value="Cytochrome Bc1 Complex, Chain C"/>
    <property type="match status" value="1"/>
</dbReference>
<dbReference type="InterPro" id="IPR005798">
    <property type="entry name" value="Cyt_b/b6_C"/>
</dbReference>
<dbReference type="InterPro" id="IPR036150">
    <property type="entry name" value="Cyt_b/b6_C_sf"/>
</dbReference>
<dbReference type="InterPro" id="IPR005797">
    <property type="entry name" value="Cyt_b/b6_N"/>
</dbReference>
<dbReference type="InterPro" id="IPR027387">
    <property type="entry name" value="Cytb/b6-like_sf"/>
</dbReference>
<dbReference type="InterPro" id="IPR030689">
    <property type="entry name" value="Cytochrome_b"/>
</dbReference>
<dbReference type="InterPro" id="IPR048260">
    <property type="entry name" value="Cytochrome_b_C_euk/bac"/>
</dbReference>
<dbReference type="InterPro" id="IPR048259">
    <property type="entry name" value="Cytochrome_b_N_euk/bac"/>
</dbReference>
<dbReference type="InterPro" id="IPR016174">
    <property type="entry name" value="Di-haem_cyt_TM"/>
</dbReference>
<dbReference type="PANTHER" id="PTHR19271">
    <property type="entry name" value="CYTOCHROME B"/>
    <property type="match status" value="1"/>
</dbReference>
<dbReference type="PANTHER" id="PTHR19271:SF16">
    <property type="entry name" value="CYTOCHROME B"/>
    <property type="match status" value="1"/>
</dbReference>
<dbReference type="Pfam" id="PF00032">
    <property type="entry name" value="Cytochrom_B_C"/>
    <property type="match status" value="1"/>
</dbReference>
<dbReference type="Pfam" id="PF00033">
    <property type="entry name" value="Cytochrome_B"/>
    <property type="match status" value="1"/>
</dbReference>
<dbReference type="PIRSF" id="PIRSF038885">
    <property type="entry name" value="COB"/>
    <property type="match status" value="1"/>
</dbReference>
<dbReference type="SUPFAM" id="SSF81648">
    <property type="entry name" value="a domain/subunit of cytochrome bc1 complex (Ubiquinol-cytochrome c reductase)"/>
    <property type="match status" value="1"/>
</dbReference>
<dbReference type="SUPFAM" id="SSF81342">
    <property type="entry name" value="Transmembrane di-heme cytochromes"/>
    <property type="match status" value="1"/>
</dbReference>
<dbReference type="PROSITE" id="PS51003">
    <property type="entry name" value="CYTB_CTER"/>
    <property type="match status" value="1"/>
</dbReference>
<dbReference type="PROSITE" id="PS51002">
    <property type="entry name" value="CYTB_NTER"/>
    <property type="match status" value="1"/>
</dbReference>
<evidence type="ECO:0000250" key="1"/>
<evidence type="ECO:0000250" key="2">
    <source>
        <dbReference type="UniProtKB" id="P00157"/>
    </source>
</evidence>
<evidence type="ECO:0000255" key="3">
    <source>
        <dbReference type="PROSITE-ProRule" id="PRU00967"/>
    </source>
</evidence>
<evidence type="ECO:0000255" key="4">
    <source>
        <dbReference type="PROSITE-ProRule" id="PRU00968"/>
    </source>
</evidence>
<protein>
    <recommendedName>
        <fullName>Cytochrome b</fullName>
    </recommendedName>
    <alternativeName>
        <fullName>Complex III subunit 3</fullName>
    </alternativeName>
    <alternativeName>
        <fullName>Complex III subunit III</fullName>
    </alternativeName>
    <alternativeName>
        <fullName>Cytochrome b-c1 complex subunit 3</fullName>
    </alternativeName>
    <alternativeName>
        <fullName>Ubiquinol-cytochrome-c reductase complex cytochrome b subunit</fullName>
    </alternativeName>
</protein>
<name>CYB_GEOTR</name>
<feature type="chain" id="PRO_0000061000" description="Cytochrome b">
    <location>
        <begin position="1"/>
        <end position="380"/>
    </location>
</feature>
<feature type="transmembrane region" description="Helical" evidence="2">
    <location>
        <begin position="34"/>
        <end position="54"/>
    </location>
</feature>
<feature type="transmembrane region" description="Helical" evidence="2">
    <location>
        <begin position="78"/>
        <end position="99"/>
    </location>
</feature>
<feature type="transmembrane region" description="Helical" evidence="2">
    <location>
        <begin position="114"/>
        <end position="134"/>
    </location>
</feature>
<feature type="transmembrane region" description="Helical" evidence="2">
    <location>
        <begin position="179"/>
        <end position="199"/>
    </location>
</feature>
<feature type="transmembrane region" description="Helical" evidence="2">
    <location>
        <begin position="227"/>
        <end position="247"/>
    </location>
</feature>
<feature type="transmembrane region" description="Helical" evidence="2">
    <location>
        <begin position="289"/>
        <end position="309"/>
    </location>
</feature>
<feature type="transmembrane region" description="Helical" evidence="2">
    <location>
        <begin position="321"/>
        <end position="341"/>
    </location>
</feature>
<feature type="transmembrane region" description="Helical" evidence="2">
    <location>
        <begin position="348"/>
        <end position="368"/>
    </location>
</feature>
<feature type="binding site" description="axial binding residue" evidence="2">
    <location>
        <position position="84"/>
    </location>
    <ligand>
        <name>heme b</name>
        <dbReference type="ChEBI" id="CHEBI:60344"/>
        <label>b562</label>
    </ligand>
    <ligandPart>
        <name>Fe</name>
        <dbReference type="ChEBI" id="CHEBI:18248"/>
    </ligandPart>
</feature>
<feature type="binding site" description="axial binding residue" evidence="2">
    <location>
        <position position="98"/>
    </location>
    <ligand>
        <name>heme b</name>
        <dbReference type="ChEBI" id="CHEBI:60344"/>
        <label>b566</label>
    </ligand>
    <ligandPart>
        <name>Fe</name>
        <dbReference type="ChEBI" id="CHEBI:18248"/>
    </ligandPart>
</feature>
<feature type="binding site" description="axial binding residue" evidence="2">
    <location>
        <position position="183"/>
    </location>
    <ligand>
        <name>heme b</name>
        <dbReference type="ChEBI" id="CHEBI:60344"/>
        <label>b562</label>
    </ligand>
    <ligandPart>
        <name>Fe</name>
        <dbReference type="ChEBI" id="CHEBI:18248"/>
    </ligandPart>
</feature>
<feature type="binding site" description="axial binding residue" evidence="2">
    <location>
        <position position="197"/>
    </location>
    <ligand>
        <name>heme b</name>
        <dbReference type="ChEBI" id="CHEBI:60344"/>
        <label>b566</label>
    </ligand>
    <ligandPart>
        <name>Fe</name>
        <dbReference type="ChEBI" id="CHEBI:18248"/>
    </ligandPart>
</feature>
<feature type="binding site" evidence="2">
    <location>
        <position position="202"/>
    </location>
    <ligand>
        <name>a ubiquinone</name>
        <dbReference type="ChEBI" id="CHEBI:16389"/>
    </ligand>
</feature>
<organism>
    <name type="scientific">Geothlypis trichas</name>
    <name type="common">Common yellowthroat</name>
    <name type="synonym">Turdus trichas</name>
    <dbReference type="NCBI Taxonomy" id="135433"/>
    <lineage>
        <taxon>Eukaryota</taxon>
        <taxon>Metazoa</taxon>
        <taxon>Chordata</taxon>
        <taxon>Craniata</taxon>
        <taxon>Vertebrata</taxon>
        <taxon>Euteleostomi</taxon>
        <taxon>Archelosauria</taxon>
        <taxon>Archosauria</taxon>
        <taxon>Dinosauria</taxon>
        <taxon>Saurischia</taxon>
        <taxon>Theropoda</taxon>
        <taxon>Coelurosauria</taxon>
        <taxon>Aves</taxon>
        <taxon>Neognathae</taxon>
        <taxon>Neoaves</taxon>
        <taxon>Telluraves</taxon>
        <taxon>Australaves</taxon>
        <taxon>Passeriformes</taxon>
        <taxon>Passeroidea</taxon>
        <taxon>Parulidae</taxon>
        <taxon>Geothlypis</taxon>
    </lineage>
</organism>
<accession>Q8M4E6</accession>
<geneLocation type="mitochondrion"/>
<sequence>MALNLRKNHQILKIINDALIDLPAPSNISTWWNFGSLLGICLITQIVTGLLLAMHYTADTNLAFSSVAHMCRDVQFGWLIRNLHANGASFFFICIYLHIGRGLYYGSYLNKETWNVGVILLLTLMATAFVGYVLPWGQMSFWGATVITNLFSAIPYIGQTLVEWAWGGFSVDNPTLTRFFALHFLLPFVIVGLTLVHLTFLHETGSNNPLGIPSDCDKIPFHPYYTIKDILGFALMLSLLVSLALFAPNLLGDPENFTPANPLVTPPHIKPEWYFLFAYAILRSIPNKLGGVLALAASILVLFLTPLLHTSKLRSMTFRPLSQILFWTLVANVLILTWVGSQPVEHPFIIIGQLASLTYFTIILILFPLAAALENKLLKL</sequence>
<gene>
    <name type="primary">MT-CYB</name>
    <name type="synonym">COB</name>
    <name type="synonym">CYTB</name>
    <name type="synonym">MTCYB</name>
</gene>
<keyword id="KW-0249">Electron transport</keyword>
<keyword id="KW-0349">Heme</keyword>
<keyword id="KW-0408">Iron</keyword>
<keyword id="KW-0472">Membrane</keyword>
<keyword id="KW-0479">Metal-binding</keyword>
<keyword id="KW-0496">Mitochondrion</keyword>
<keyword id="KW-0999">Mitochondrion inner membrane</keyword>
<keyword id="KW-0679">Respiratory chain</keyword>
<keyword id="KW-0812">Transmembrane</keyword>
<keyword id="KW-1133">Transmembrane helix</keyword>
<keyword id="KW-0813">Transport</keyword>
<keyword id="KW-0830">Ubiquinone</keyword>
<proteinExistence type="inferred from homology"/>
<comment type="function">
    <text evidence="2">Component of the ubiquinol-cytochrome c reductase complex (complex III or cytochrome b-c1 complex) that is part of the mitochondrial respiratory chain. The b-c1 complex mediates electron transfer from ubiquinol to cytochrome c. Contributes to the generation of a proton gradient across the mitochondrial membrane that is then used for ATP synthesis.</text>
</comment>
<comment type="cofactor">
    <cofactor evidence="2">
        <name>heme b</name>
        <dbReference type="ChEBI" id="CHEBI:60344"/>
    </cofactor>
    <text evidence="2">Binds 2 heme b groups non-covalently.</text>
</comment>
<comment type="subunit">
    <text evidence="2">The cytochrome bc1 complex contains 11 subunits: 3 respiratory subunits (MT-CYB, CYC1 and UQCRFS1), 2 core proteins (UQCRC1 and UQCRC2) and 6 low-molecular weight proteins (UQCRH/QCR6, UQCRB/QCR7, UQCRQ/QCR8, UQCR10/QCR9, UQCR11/QCR10 and a cleavage product of UQCRFS1). This cytochrome bc1 complex then forms a dimer.</text>
</comment>
<comment type="subcellular location">
    <subcellularLocation>
        <location evidence="2">Mitochondrion inner membrane</location>
        <topology evidence="2">Multi-pass membrane protein</topology>
    </subcellularLocation>
</comment>
<comment type="miscellaneous">
    <text evidence="1">Heme 1 (or BL or b562) is low-potential and absorbs at about 562 nm, and heme 2 (or BH or b566) is high-potential and absorbs at about 566 nm.</text>
</comment>
<comment type="similarity">
    <text evidence="3 4">Belongs to the cytochrome b family.</text>
</comment>
<comment type="caution">
    <text evidence="2">The full-length protein contains only eight transmembrane helices, not nine as predicted by bioinformatics tools.</text>
</comment>
<reference key="1">
    <citation type="journal article" date="2002" name="Auk">
        <title>What is a wood-warbler? Molecular characterization of a monophyletic Parulidae.</title>
        <authorList>
            <person name="Lovette I.J."/>
            <person name="Bermingham E."/>
        </authorList>
    </citation>
    <scope>NUCLEOTIDE SEQUENCE [GENOMIC DNA]</scope>
    <source>
        <strain>Isolate JAGTR1</strain>
    </source>
</reference>